<gene>
    <name evidence="1" type="primary">glyA</name>
    <name type="ordered locus">LL0601</name>
    <name type="ORF">L0082</name>
</gene>
<keyword id="KW-0028">Amino-acid biosynthesis</keyword>
<keyword id="KW-0963">Cytoplasm</keyword>
<keyword id="KW-0554">One-carbon metabolism</keyword>
<keyword id="KW-0663">Pyridoxal phosphate</keyword>
<keyword id="KW-1185">Reference proteome</keyword>
<keyword id="KW-0808">Transferase</keyword>
<evidence type="ECO:0000255" key="1">
    <source>
        <dbReference type="HAMAP-Rule" id="MF_00051"/>
    </source>
</evidence>
<name>GLYA_LACLA</name>
<protein>
    <recommendedName>
        <fullName evidence="1">Serine hydroxymethyltransferase</fullName>
        <shortName evidence="1">SHMT</shortName>
        <shortName evidence="1">Serine methylase</shortName>
        <ecNumber evidence="1">2.1.2.1</ecNumber>
    </recommendedName>
</protein>
<sequence length="415" mass="44790">MIFDKEDFESFDPELWAAIHAEEIRQQQNIELIASENIVSKAVMAAQGSVLTNKYAEGYPGKRYYGGTEAVDVVENLAIERAKELFGAKFANVQPHSGSQANAAAYMALIQPGDTVLGMDLNAGGHLTHGASVNFSGKTYHFVPYGVNSETELLDYDEILKIAKQVQPKLIVAGASAYSRLIDFAKFREIADSVGAKLMVDMAHIAGLVATGAHPNPLPYADVVTTTTHKTLRGPRGGMILTNDEALAKKINSAIFPGTQGGPLEHVIAAKAVAFKEALDPEFTTYIEQVIKNTQAMAEEFAKVEGLRLIAGGSDNHLLNLKVLDLGINGKEAQDLLDSVHITLNKEAIPDETLSPFKTSGVRIGAAAITSRGFKEVEAKKVAQLVSEALVNHDNQEKLAEVRKAALELTRQFPL</sequence>
<feature type="chain" id="PRO_0000113591" description="Serine hydroxymethyltransferase">
    <location>
        <begin position="1"/>
        <end position="415"/>
    </location>
</feature>
<feature type="binding site" evidence="1">
    <location>
        <position position="121"/>
    </location>
    <ligand>
        <name>(6S)-5,6,7,8-tetrahydrofolate</name>
        <dbReference type="ChEBI" id="CHEBI:57453"/>
    </ligand>
</feature>
<feature type="binding site" evidence="1">
    <location>
        <begin position="125"/>
        <end position="127"/>
    </location>
    <ligand>
        <name>(6S)-5,6,7,8-tetrahydrofolate</name>
        <dbReference type="ChEBI" id="CHEBI:57453"/>
    </ligand>
</feature>
<feature type="binding site" evidence="1">
    <location>
        <begin position="355"/>
        <end position="357"/>
    </location>
    <ligand>
        <name>(6S)-5,6,7,8-tetrahydrofolate</name>
        <dbReference type="ChEBI" id="CHEBI:57453"/>
    </ligand>
</feature>
<feature type="site" description="Plays an important role in substrate specificity" evidence="1">
    <location>
        <position position="229"/>
    </location>
</feature>
<feature type="modified residue" description="N6-(pyridoxal phosphate)lysine" evidence="1">
    <location>
        <position position="230"/>
    </location>
</feature>
<reference key="1">
    <citation type="journal article" date="2001" name="Genome Res.">
        <title>The complete genome sequence of the lactic acid bacterium Lactococcus lactis ssp. lactis IL1403.</title>
        <authorList>
            <person name="Bolotin A."/>
            <person name="Wincker P."/>
            <person name="Mauger S."/>
            <person name="Jaillon O."/>
            <person name="Malarme K."/>
            <person name="Weissenbach J."/>
            <person name="Ehrlich S.D."/>
            <person name="Sorokin A."/>
        </authorList>
    </citation>
    <scope>NUCLEOTIDE SEQUENCE [LARGE SCALE GENOMIC DNA]</scope>
    <source>
        <strain>IL1403</strain>
    </source>
</reference>
<proteinExistence type="inferred from homology"/>
<accession>Q9CHW7</accession>
<organism>
    <name type="scientific">Lactococcus lactis subsp. lactis (strain IL1403)</name>
    <name type="common">Streptococcus lactis</name>
    <dbReference type="NCBI Taxonomy" id="272623"/>
    <lineage>
        <taxon>Bacteria</taxon>
        <taxon>Bacillati</taxon>
        <taxon>Bacillota</taxon>
        <taxon>Bacilli</taxon>
        <taxon>Lactobacillales</taxon>
        <taxon>Streptococcaceae</taxon>
        <taxon>Lactococcus</taxon>
    </lineage>
</organism>
<dbReference type="EC" id="2.1.2.1" evidence="1"/>
<dbReference type="EMBL" id="AE005176">
    <property type="protein sequence ID" value="AAK04699.1"/>
    <property type="molecule type" value="Genomic_DNA"/>
</dbReference>
<dbReference type="PIR" id="A86700">
    <property type="entry name" value="A86700"/>
</dbReference>
<dbReference type="RefSeq" id="NP_266757.1">
    <property type="nucleotide sequence ID" value="NC_002662.1"/>
</dbReference>
<dbReference type="RefSeq" id="WP_003129504.1">
    <property type="nucleotide sequence ID" value="NC_002662.1"/>
</dbReference>
<dbReference type="SMR" id="Q9CHW7"/>
<dbReference type="PaxDb" id="272623-L0082"/>
<dbReference type="EnsemblBacteria" id="AAK04699">
    <property type="protein sequence ID" value="AAK04699"/>
    <property type="gene ID" value="L0082"/>
</dbReference>
<dbReference type="KEGG" id="lla:L0082"/>
<dbReference type="PATRIC" id="fig|272623.7.peg.641"/>
<dbReference type="eggNOG" id="COG0112">
    <property type="taxonomic scope" value="Bacteria"/>
</dbReference>
<dbReference type="HOGENOM" id="CLU_022477_2_1_9"/>
<dbReference type="OrthoDB" id="9803846at2"/>
<dbReference type="UniPathway" id="UPA00193"/>
<dbReference type="UniPathway" id="UPA00288">
    <property type="reaction ID" value="UER01023"/>
</dbReference>
<dbReference type="Proteomes" id="UP000002196">
    <property type="component" value="Chromosome"/>
</dbReference>
<dbReference type="GO" id="GO:0005829">
    <property type="term" value="C:cytosol"/>
    <property type="evidence" value="ECO:0007669"/>
    <property type="project" value="TreeGrafter"/>
</dbReference>
<dbReference type="GO" id="GO:0004372">
    <property type="term" value="F:glycine hydroxymethyltransferase activity"/>
    <property type="evidence" value="ECO:0007669"/>
    <property type="project" value="UniProtKB-UniRule"/>
</dbReference>
<dbReference type="GO" id="GO:0030170">
    <property type="term" value="F:pyridoxal phosphate binding"/>
    <property type="evidence" value="ECO:0007669"/>
    <property type="project" value="UniProtKB-UniRule"/>
</dbReference>
<dbReference type="GO" id="GO:0019264">
    <property type="term" value="P:glycine biosynthetic process from serine"/>
    <property type="evidence" value="ECO:0007669"/>
    <property type="project" value="UniProtKB-UniRule"/>
</dbReference>
<dbReference type="GO" id="GO:0035999">
    <property type="term" value="P:tetrahydrofolate interconversion"/>
    <property type="evidence" value="ECO:0007669"/>
    <property type="project" value="UniProtKB-UniRule"/>
</dbReference>
<dbReference type="CDD" id="cd00378">
    <property type="entry name" value="SHMT"/>
    <property type="match status" value="1"/>
</dbReference>
<dbReference type="FunFam" id="3.40.640.10:FF:000001">
    <property type="entry name" value="Serine hydroxymethyltransferase"/>
    <property type="match status" value="1"/>
</dbReference>
<dbReference type="Gene3D" id="3.90.1150.10">
    <property type="entry name" value="Aspartate Aminotransferase, domain 1"/>
    <property type="match status" value="1"/>
</dbReference>
<dbReference type="Gene3D" id="3.40.640.10">
    <property type="entry name" value="Type I PLP-dependent aspartate aminotransferase-like (Major domain)"/>
    <property type="match status" value="1"/>
</dbReference>
<dbReference type="HAMAP" id="MF_00051">
    <property type="entry name" value="SHMT"/>
    <property type="match status" value="1"/>
</dbReference>
<dbReference type="InterPro" id="IPR015424">
    <property type="entry name" value="PyrdxlP-dep_Trfase"/>
</dbReference>
<dbReference type="InterPro" id="IPR015421">
    <property type="entry name" value="PyrdxlP-dep_Trfase_major"/>
</dbReference>
<dbReference type="InterPro" id="IPR015422">
    <property type="entry name" value="PyrdxlP-dep_Trfase_small"/>
</dbReference>
<dbReference type="InterPro" id="IPR001085">
    <property type="entry name" value="Ser_HO-MeTrfase"/>
</dbReference>
<dbReference type="InterPro" id="IPR049943">
    <property type="entry name" value="Ser_HO-MeTrfase-like"/>
</dbReference>
<dbReference type="InterPro" id="IPR019798">
    <property type="entry name" value="Ser_HO-MeTrfase_PLP_BS"/>
</dbReference>
<dbReference type="InterPro" id="IPR039429">
    <property type="entry name" value="SHMT-like_dom"/>
</dbReference>
<dbReference type="NCBIfam" id="NF000586">
    <property type="entry name" value="PRK00011.1"/>
    <property type="match status" value="1"/>
</dbReference>
<dbReference type="PANTHER" id="PTHR11680">
    <property type="entry name" value="SERINE HYDROXYMETHYLTRANSFERASE"/>
    <property type="match status" value="1"/>
</dbReference>
<dbReference type="PANTHER" id="PTHR11680:SF35">
    <property type="entry name" value="SERINE HYDROXYMETHYLTRANSFERASE 1"/>
    <property type="match status" value="1"/>
</dbReference>
<dbReference type="Pfam" id="PF00464">
    <property type="entry name" value="SHMT"/>
    <property type="match status" value="1"/>
</dbReference>
<dbReference type="PIRSF" id="PIRSF000412">
    <property type="entry name" value="SHMT"/>
    <property type="match status" value="1"/>
</dbReference>
<dbReference type="SUPFAM" id="SSF53383">
    <property type="entry name" value="PLP-dependent transferases"/>
    <property type="match status" value="1"/>
</dbReference>
<dbReference type="PROSITE" id="PS00096">
    <property type="entry name" value="SHMT"/>
    <property type="match status" value="1"/>
</dbReference>
<comment type="function">
    <text evidence="1">Catalyzes the reversible interconversion of serine and glycine with tetrahydrofolate (THF) serving as the one-carbon carrier. This reaction serves as the major source of one-carbon groups required for the biosynthesis of purines, thymidylate, methionine, and other important biomolecules. Also exhibits THF-independent aldolase activity toward beta-hydroxyamino acids, producing glycine and aldehydes, via a retro-aldol mechanism.</text>
</comment>
<comment type="catalytic activity">
    <reaction evidence="1">
        <text>(6R)-5,10-methylene-5,6,7,8-tetrahydrofolate + glycine + H2O = (6S)-5,6,7,8-tetrahydrofolate + L-serine</text>
        <dbReference type="Rhea" id="RHEA:15481"/>
        <dbReference type="ChEBI" id="CHEBI:15377"/>
        <dbReference type="ChEBI" id="CHEBI:15636"/>
        <dbReference type="ChEBI" id="CHEBI:33384"/>
        <dbReference type="ChEBI" id="CHEBI:57305"/>
        <dbReference type="ChEBI" id="CHEBI:57453"/>
        <dbReference type="EC" id="2.1.2.1"/>
    </reaction>
</comment>
<comment type="cofactor">
    <cofactor evidence="1">
        <name>pyridoxal 5'-phosphate</name>
        <dbReference type="ChEBI" id="CHEBI:597326"/>
    </cofactor>
</comment>
<comment type="pathway">
    <text evidence="1">One-carbon metabolism; tetrahydrofolate interconversion.</text>
</comment>
<comment type="pathway">
    <text evidence="1">Amino-acid biosynthesis; glycine biosynthesis; glycine from L-serine: step 1/1.</text>
</comment>
<comment type="subunit">
    <text evidence="1">Homodimer.</text>
</comment>
<comment type="subcellular location">
    <subcellularLocation>
        <location evidence="1">Cytoplasm</location>
    </subcellularLocation>
</comment>
<comment type="similarity">
    <text evidence="1">Belongs to the SHMT family.</text>
</comment>